<protein>
    <recommendedName>
        <fullName evidence="1">Dihydroorotate dehydrogenase (quinone)</fullName>
        <ecNumber evidence="1">1.3.5.2</ecNumber>
    </recommendedName>
    <alternativeName>
        <fullName evidence="1">DHOdehase</fullName>
        <shortName evidence="1">DHOD</shortName>
        <shortName evidence="1">DHODase</shortName>
    </alternativeName>
    <alternativeName>
        <fullName evidence="1">Dihydroorotate oxidase</fullName>
    </alternativeName>
</protein>
<reference key="1">
    <citation type="journal article" date="2009" name="PLoS Genet.">
        <title>Adaptations to submarine hydrothermal environments exemplified by the genome of Nautilia profundicola.</title>
        <authorList>
            <person name="Campbell B.J."/>
            <person name="Smith J.L."/>
            <person name="Hanson T.E."/>
            <person name="Klotz M.G."/>
            <person name="Stein L.Y."/>
            <person name="Lee C.K."/>
            <person name="Wu D."/>
            <person name="Robinson J.M."/>
            <person name="Khouri H.M."/>
            <person name="Eisen J.A."/>
            <person name="Cary S.C."/>
        </authorList>
    </citation>
    <scope>NUCLEOTIDE SEQUENCE [LARGE SCALE GENOMIC DNA]</scope>
    <source>
        <strain>ATCC BAA-1463 / DSM 18972 / AmH</strain>
    </source>
</reference>
<keyword id="KW-1003">Cell membrane</keyword>
<keyword id="KW-0285">Flavoprotein</keyword>
<keyword id="KW-0288">FMN</keyword>
<keyword id="KW-0472">Membrane</keyword>
<keyword id="KW-0560">Oxidoreductase</keyword>
<keyword id="KW-0665">Pyrimidine biosynthesis</keyword>
<evidence type="ECO:0000255" key="1">
    <source>
        <dbReference type="HAMAP-Rule" id="MF_00225"/>
    </source>
</evidence>
<proteinExistence type="inferred from homology"/>
<accession>B9L9P6</accession>
<dbReference type="EC" id="1.3.5.2" evidence="1"/>
<dbReference type="EMBL" id="CP001279">
    <property type="protein sequence ID" value="ACM93071.1"/>
    <property type="molecule type" value="Genomic_DNA"/>
</dbReference>
<dbReference type="RefSeq" id="WP_015902123.1">
    <property type="nucleotide sequence ID" value="NC_012115.1"/>
</dbReference>
<dbReference type="SMR" id="B9L9P6"/>
<dbReference type="STRING" id="598659.NAMH_0953"/>
<dbReference type="KEGG" id="nam:NAMH_0953"/>
<dbReference type="eggNOG" id="COG0167">
    <property type="taxonomic scope" value="Bacteria"/>
</dbReference>
<dbReference type="HOGENOM" id="CLU_013640_2_0_7"/>
<dbReference type="OrthoDB" id="9802377at2"/>
<dbReference type="UniPathway" id="UPA00070">
    <property type="reaction ID" value="UER00946"/>
</dbReference>
<dbReference type="Proteomes" id="UP000000448">
    <property type="component" value="Chromosome"/>
</dbReference>
<dbReference type="GO" id="GO:0005737">
    <property type="term" value="C:cytoplasm"/>
    <property type="evidence" value="ECO:0007669"/>
    <property type="project" value="InterPro"/>
</dbReference>
<dbReference type="GO" id="GO:0005886">
    <property type="term" value="C:plasma membrane"/>
    <property type="evidence" value="ECO:0007669"/>
    <property type="project" value="UniProtKB-SubCell"/>
</dbReference>
<dbReference type="GO" id="GO:0106430">
    <property type="term" value="F:dihydroorotate dehydrogenase (quinone) activity"/>
    <property type="evidence" value="ECO:0007669"/>
    <property type="project" value="UniProtKB-EC"/>
</dbReference>
<dbReference type="GO" id="GO:0006207">
    <property type="term" value="P:'de novo' pyrimidine nucleobase biosynthetic process"/>
    <property type="evidence" value="ECO:0007669"/>
    <property type="project" value="InterPro"/>
</dbReference>
<dbReference type="GO" id="GO:0044205">
    <property type="term" value="P:'de novo' UMP biosynthetic process"/>
    <property type="evidence" value="ECO:0007669"/>
    <property type="project" value="UniProtKB-UniRule"/>
</dbReference>
<dbReference type="CDD" id="cd04738">
    <property type="entry name" value="DHOD_2_like"/>
    <property type="match status" value="1"/>
</dbReference>
<dbReference type="Gene3D" id="3.20.20.70">
    <property type="entry name" value="Aldolase class I"/>
    <property type="match status" value="1"/>
</dbReference>
<dbReference type="HAMAP" id="MF_00225">
    <property type="entry name" value="DHO_dh_type2"/>
    <property type="match status" value="1"/>
</dbReference>
<dbReference type="InterPro" id="IPR013785">
    <property type="entry name" value="Aldolase_TIM"/>
</dbReference>
<dbReference type="InterPro" id="IPR050074">
    <property type="entry name" value="DHO_dehydrogenase"/>
</dbReference>
<dbReference type="InterPro" id="IPR005719">
    <property type="entry name" value="Dihydroorotate_DH_2"/>
</dbReference>
<dbReference type="InterPro" id="IPR005720">
    <property type="entry name" value="Dihydroorotate_DH_cat"/>
</dbReference>
<dbReference type="InterPro" id="IPR001295">
    <property type="entry name" value="Dihydroorotate_DH_CS"/>
</dbReference>
<dbReference type="NCBIfam" id="NF003652">
    <property type="entry name" value="PRK05286.2-5"/>
    <property type="match status" value="1"/>
</dbReference>
<dbReference type="NCBIfam" id="TIGR01036">
    <property type="entry name" value="pyrD_sub2"/>
    <property type="match status" value="1"/>
</dbReference>
<dbReference type="PANTHER" id="PTHR48109:SF4">
    <property type="entry name" value="DIHYDROOROTATE DEHYDROGENASE (QUINONE), MITOCHONDRIAL"/>
    <property type="match status" value="1"/>
</dbReference>
<dbReference type="PANTHER" id="PTHR48109">
    <property type="entry name" value="DIHYDROOROTATE DEHYDROGENASE (QUINONE), MITOCHONDRIAL-RELATED"/>
    <property type="match status" value="1"/>
</dbReference>
<dbReference type="Pfam" id="PF01180">
    <property type="entry name" value="DHO_dh"/>
    <property type="match status" value="1"/>
</dbReference>
<dbReference type="SUPFAM" id="SSF51395">
    <property type="entry name" value="FMN-linked oxidoreductases"/>
    <property type="match status" value="1"/>
</dbReference>
<dbReference type="PROSITE" id="PS00911">
    <property type="entry name" value="DHODEHASE_1"/>
    <property type="match status" value="1"/>
</dbReference>
<dbReference type="PROSITE" id="PS00912">
    <property type="entry name" value="DHODEHASE_2"/>
    <property type="match status" value="1"/>
</dbReference>
<feature type="chain" id="PRO_1000195084" description="Dihydroorotate dehydrogenase (quinone)">
    <location>
        <begin position="1"/>
        <end position="359"/>
    </location>
</feature>
<feature type="active site" description="Nucleophile" evidence="1">
    <location>
        <position position="182"/>
    </location>
</feature>
<feature type="binding site" evidence="1">
    <location>
        <begin position="68"/>
        <end position="72"/>
    </location>
    <ligand>
        <name>FMN</name>
        <dbReference type="ChEBI" id="CHEBI:58210"/>
    </ligand>
</feature>
<feature type="binding site" evidence="1">
    <location>
        <position position="72"/>
    </location>
    <ligand>
        <name>substrate</name>
    </ligand>
</feature>
<feature type="binding site" evidence="1">
    <location>
        <position position="92"/>
    </location>
    <ligand>
        <name>FMN</name>
        <dbReference type="ChEBI" id="CHEBI:58210"/>
    </ligand>
</feature>
<feature type="binding site" evidence="1">
    <location>
        <begin position="117"/>
        <end position="121"/>
    </location>
    <ligand>
        <name>substrate</name>
    </ligand>
</feature>
<feature type="binding site" evidence="1">
    <location>
        <position position="146"/>
    </location>
    <ligand>
        <name>FMN</name>
        <dbReference type="ChEBI" id="CHEBI:58210"/>
    </ligand>
</feature>
<feature type="binding site" evidence="1">
    <location>
        <position position="179"/>
    </location>
    <ligand>
        <name>FMN</name>
        <dbReference type="ChEBI" id="CHEBI:58210"/>
    </ligand>
</feature>
<feature type="binding site" evidence="1">
    <location>
        <position position="179"/>
    </location>
    <ligand>
        <name>substrate</name>
    </ligand>
</feature>
<feature type="binding site" evidence="1">
    <location>
        <position position="184"/>
    </location>
    <ligand>
        <name>substrate</name>
    </ligand>
</feature>
<feature type="binding site" evidence="1">
    <location>
        <position position="215"/>
    </location>
    <ligand>
        <name>FMN</name>
        <dbReference type="ChEBI" id="CHEBI:58210"/>
    </ligand>
</feature>
<feature type="binding site" evidence="1">
    <location>
        <position position="243"/>
    </location>
    <ligand>
        <name>FMN</name>
        <dbReference type="ChEBI" id="CHEBI:58210"/>
    </ligand>
</feature>
<feature type="binding site" evidence="1">
    <location>
        <begin position="244"/>
        <end position="245"/>
    </location>
    <ligand>
        <name>substrate</name>
    </ligand>
</feature>
<feature type="binding site" evidence="1">
    <location>
        <position position="263"/>
    </location>
    <ligand>
        <name>FMN</name>
        <dbReference type="ChEBI" id="CHEBI:58210"/>
    </ligand>
</feature>
<feature type="binding site" evidence="1">
    <location>
        <position position="292"/>
    </location>
    <ligand>
        <name>FMN</name>
        <dbReference type="ChEBI" id="CHEBI:58210"/>
    </ligand>
</feature>
<feature type="binding site" evidence="1">
    <location>
        <begin position="313"/>
        <end position="314"/>
    </location>
    <ligand>
        <name>FMN</name>
        <dbReference type="ChEBI" id="CHEBI:58210"/>
    </ligand>
</feature>
<name>PYRD_NAUPA</name>
<organism>
    <name type="scientific">Nautilia profundicola (strain ATCC BAA-1463 / DSM 18972 / AmH)</name>
    <dbReference type="NCBI Taxonomy" id="598659"/>
    <lineage>
        <taxon>Bacteria</taxon>
        <taxon>Pseudomonadati</taxon>
        <taxon>Campylobacterota</taxon>
        <taxon>Epsilonproteobacteria</taxon>
        <taxon>Nautiliales</taxon>
        <taxon>Nautiliaceae</taxon>
        <taxon>Nautilia</taxon>
    </lineage>
</organism>
<gene>
    <name evidence="1" type="primary">pyrD</name>
    <name type="ordered locus">NAMH_0953</name>
</gene>
<sequence>MSFFNMVKPLIYKTDPELAHDLVDLAMRTARRCPLFFNPLVKANFVDDVMLHQKIWDLEFKNPVGVAAGFDKHATMVYGWPALGFGWGEIGAVTPKPQPGNEKPRAWRHIEYEAVQNAYGFNNEGVEVIKKRLKKIYPFILPIGANIGKNKTTPEERAVEDYKILVNELKDVVDFFVVNVSSPNTPGLRDLLNAEFISSLFGELKNLTDKPILIKFSPDMEDELIINLANYSVLAGADGIIVTNTTVNYDLVNSEIKRGGISGKPLAQRSYEVLRIVAGEVFGKVPIISVGGIDSAEEAYKRIKAGASLLQVYTAIIYKGPGIVGEINRGLIELLKKDGYSHISEAIGVEIPKKLENKA</sequence>
<comment type="function">
    <text evidence="1">Catalyzes the conversion of dihydroorotate to orotate with quinone as electron acceptor.</text>
</comment>
<comment type="catalytic activity">
    <reaction evidence="1">
        <text>(S)-dihydroorotate + a quinone = orotate + a quinol</text>
        <dbReference type="Rhea" id="RHEA:30187"/>
        <dbReference type="ChEBI" id="CHEBI:24646"/>
        <dbReference type="ChEBI" id="CHEBI:30839"/>
        <dbReference type="ChEBI" id="CHEBI:30864"/>
        <dbReference type="ChEBI" id="CHEBI:132124"/>
        <dbReference type="EC" id="1.3.5.2"/>
    </reaction>
</comment>
<comment type="cofactor">
    <cofactor evidence="1">
        <name>FMN</name>
        <dbReference type="ChEBI" id="CHEBI:58210"/>
    </cofactor>
    <text evidence="1">Binds 1 FMN per subunit.</text>
</comment>
<comment type="pathway">
    <text evidence="1">Pyrimidine metabolism; UMP biosynthesis via de novo pathway; orotate from (S)-dihydroorotate (quinone route): step 1/1.</text>
</comment>
<comment type="subunit">
    <text evidence="1">Monomer.</text>
</comment>
<comment type="subcellular location">
    <subcellularLocation>
        <location evidence="1">Cell membrane</location>
        <topology evidence="1">Peripheral membrane protein</topology>
    </subcellularLocation>
</comment>
<comment type="similarity">
    <text evidence="1">Belongs to the dihydroorotate dehydrogenase family. Type 2 subfamily.</text>
</comment>